<name>MLRP2_ACRMI</name>
<feature type="chain" id="PRO_0000429551" description="MAM and LDL-receptor class A domain-containing protein 2">
    <location>
        <begin position="1" status="less than"/>
        <end position="7311" status="greater than"/>
    </location>
</feature>
<feature type="domain" description="MAM 1" evidence="3">
    <location>
        <begin position="4"/>
        <end position="171"/>
    </location>
</feature>
<feature type="domain" description="MAM 2" evidence="3">
    <location>
        <begin position="199"/>
        <end position="361"/>
    </location>
</feature>
<feature type="domain" description="MAM 3" evidence="3">
    <location>
        <begin position="363"/>
        <end position="530"/>
    </location>
</feature>
<feature type="domain" description="MAM 4" evidence="3">
    <location>
        <begin position="532"/>
        <end position="695"/>
    </location>
</feature>
<feature type="domain" description="MAM 5" evidence="3">
    <location>
        <begin position="727"/>
        <end position="887"/>
    </location>
</feature>
<feature type="domain" description="MAM 6" evidence="3">
    <location>
        <begin position="889"/>
        <end position="1050"/>
    </location>
</feature>
<feature type="domain" description="MAM 7" evidence="3">
    <location>
        <begin position="1052"/>
        <end position="1220"/>
    </location>
</feature>
<feature type="domain" description="MAM 8" evidence="3">
    <location>
        <begin position="1228"/>
        <end position="1392"/>
    </location>
</feature>
<feature type="domain" description="MAM 9" evidence="3">
    <location>
        <begin position="1394"/>
        <end position="1557"/>
    </location>
</feature>
<feature type="domain" description="MAM 10" evidence="3">
    <location>
        <begin position="1559"/>
        <end position="1722"/>
    </location>
</feature>
<feature type="domain" description="MAM 11" evidence="3">
    <location>
        <begin position="1755"/>
        <end position="1918"/>
    </location>
</feature>
<feature type="domain" description="MAM 12" evidence="3">
    <location>
        <begin position="1920"/>
        <end position="2087"/>
    </location>
</feature>
<feature type="domain" description="MAM 13" evidence="3">
    <location>
        <begin position="2089"/>
        <end position="2254"/>
    </location>
</feature>
<feature type="domain" description="MAM 14" evidence="3">
    <location>
        <begin position="2274"/>
        <end position="2437"/>
    </location>
</feature>
<feature type="domain" description="MAM 15" evidence="3">
    <location>
        <begin position="2439"/>
        <end position="2601"/>
    </location>
</feature>
<feature type="domain" description="MAM 16" evidence="3">
    <location>
        <begin position="2603"/>
        <end position="2771"/>
    </location>
</feature>
<feature type="domain" description="P-type 1" evidence="4">
    <location>
        <begin position="2771"/>
        <end position="2817"/>
    </location>
</feature>
<feature type="domain" description="P-type 2" evidence="4">
    <location>
        <begin position="2818"/>
        <end position="2862"/>
    </location>
</feature>
<feature type="domain" description="MAM 17" evidence="3">
    <location>
        <begin position="2883"/>
        <end position="3048"/>
    </location>
</feature>
<feature type="domain" description="MAM 18" evidence="3">
    <location>
        <begin position="3050"/>
        <end position="3214"/>
    </location>
</feature>
<feature type="domain" description="MAM 19" evidence="3">
    <location>
        <begin position="3216"/>
        <end position="3384"/>
    </location>
</feature>
<feature type="domain" description="MAM 20" evidence="3">
    <location>
        <begin position="3429"/>
        <end position="3587"/>
    </location>
</feature>
<feature type="domain" description="LDL-receptor class A 1" evidence="2">
    <location>
        <begin position="3593"/>
        <end position="3628"/>
    </location>
</feature>
<feature type="domain" description="MAM 21" evidence="3">
    <location>
        <begin position="3632"/>
        <end position="3794"/>
    </location>
</feature>
<feature type="domain" description="LDL-receptor class A 2" evidence="2">
    <location>
        <begin position="3814"/>
        <end position="3850"/>
    </location>
</feature>
<feature type="domain" description="MAM 22" evidence="3">
    <location>
        <begin position="3850"/>
        <end position="4011"/>
    </location>
</feature>
<feature type="domain" description="LDL-receptor class A 3" evidence="2">
    <location>
        <begin position="4016"/>
        <end position="4054"/>
    </location>
</feature>
<feature type="domain" description="MAM 23" evidence="3">
    <location>
        <begin position="4058"/>
        <end position="4221"/>
    </location>
</feature>
<feature type="domain" description="LDL-receptor class A 4" evidence="2">
    <location>
        <begin position="4239"/>
        <end position="4276"/>
    </location>
</feature>
<feature type="domain" description="MAM 24" evidence="3">
    <location>
        <begin position="4277"/>
        <end position="4438"/>
    </location>
</feature>
<feature type="domain" description="LDL-receptor class A 5" evidence="2">
    <location>
        <begin position="4444"/>
        <end position="4483"/>
    </location>
</feature>
<feature type="domain" description="MAM 25" evidence="3">
    <location>
        <begin position="4486"/>
        <end position="4646"/>
    </location>
</feature>
<feature type="domain" description="LDL-receptor class A 6" evidence="2">
    <location>
        <begin position="4660"/>
        <end position="4699"/>
    </location>
</feature>
<feature type="domain" description="MAM 26" evidence="3">
    <location>
        <begin position="4700"/>
        <end position="4862"/>
    </location>
</feature>
<feature type="domain" description="LDL-receptor class A 7" evidence="2">
    <location>
        <begin position="4859"/>
        <end position="4899"/>
    </location>
</feature>
<feature type="domain" description="MAM 27" evidence="3">
    <location>
        <begin position="4903"/>
        <end position="5063"/>
    </location>
</feature>
<feature type="domain" description="LDL-receptor class A 8" evidence="2">
    <location>
        <begin position="5085"/>
        <end position="5122"/>
    </location>
</feature>
<feature type="domain" description="MAM 28" evidence="3">
    <location>
        <begin position="5123"/>
        <end position="5281"/>
    </location>
</feature>
<feature type="domain" description="LDL-receptor class A 9" evidence="2">
    <location>
        <begin position="5287"/>
        <end position="5322"/>
    </location>
</feature>
<feature type="domain" description="MAM 29" evidence="3">
    <location>
        <begin position="5326"/>
        <end position="5489"/>
    </location>
</feature>
<feature type="domain" description="LDL-receptor class A 10" evidence="2">
    <location>
        <begin position="5513"/>
        <end position="5552"/>
    </location>
</feature>
<feature type="domain" description="MAM 30" evidence="3">
    <location>
        <begin position="5554"/>
        <end position="5719"/>
    </location>
</feature>
<feature type="domain" description="LDL-receptor class A 11" evidence="2">
    <location>
        <begin position="5725"/>
        <end position="5763"/>
    </location>
</feature>
<feature type="domain" description="MAM 31" evidence="3">
    <location>
        <begin position="5768"/>
        <end position="5935"/>
    </location>
</feature>
<feature type="domain" description="LDL-receptor class A 12" evidence="2">
    <location>
        <begin position="5957"/>
        <end position="5993"/>
    </location>
</feature>
<feature type="domain" description="MAM 32" evidence="3">
    <location>
        <begin position="5994"/>
        <end position="6156"/>
    </location>
</feature>
<feature type="domain" description="LDL-receptor class A 13" evidence="2">
    <location>
        <begin position="6161"/>
        <end position="6200"/>
    </location>
</feature>
<feature type="domain" description="MAM 33" evidence="3">
    <location>
        <begin position="6204"/>
        <end position="6365"/>
    </location>
</feature>
<feature type="domain" description="LDL-receptor class A 14" evidence="2">
    <location>
        <begin position="6377"/>
        <end position="6414"/>
    </location>
</feature>
<feature type="domain" description="MAM 34" evidence="3">
    <location>
        <begin position="6430"/>
        <end position="6590"/>
    </location>
</feature>
<feature type="domain" description="MAM 35" evidence="3">
    <location>
        <begin position="6606"/>
        <end position="6779"/>
    </location>
</feature>
<feature type="domain" description="MAM 36" evidence="3">
    <location>
        <begin position="6808"/>
        <end position="6965"/>
    </location>
</feature>
<feature type="domain" description="MAM 37" evidence="3">
    <location>
        <begin position="7173"/>
        <end position="7311" status="greater than"/>
    </location>
</feature>
<feature type="region of interest" description="Disordered" evidence="5">
    <location>
        <begin position="2461"/>
        <end position="2481"/>
    </location>
</feature>
<feature type="region of interest" description="Disordered" evidence="5">
    <location>
        <begin position="6014"/>
        <end position="6034"/>
    </location>
</feature>
<feature type="compositionally biased region" description="Low complexity" evidence="5">
    <location>
        <begin position="2466"/>
        <end position="2475"/>
    </location>
</feature>
<feature type="compositionally biased region" description="Polar residues" evidence="5">
    <location>
        <begin position="6023"/>
        <end position="6034"/>
    </location>
</feature>
<feature type="disulfide bond" evidence="1">
    <location>
        <begin position="2773"/>
        <end position="2802"/>
    </location>
</feature>
<feature type="disulfide bond" evidence="1">
    <location>
        <begin position="2784"/>
        <end position="2801"/>
    </location>
</feature>
<feature type="disulfide bond" evidence="1">
    <location>
        <begin position="2795"/>
        <end position="2813"/>
    </location>
</feature>
<feature type="disulfide bond" evidence="1">
    <location>
        <begin position="2820"/>
        <end position="2847"/>
    </location>
</feature>
<feature type="disulfide bond" evidence="1">
    <location>
        <begin position="2831"/>
        <end position="2846"/>
    </location>
</feature>
<feature type="disulfide bond" evidence="1">
    <location>
        <begin position="2841"/>
        <end position="2858"/>
    </location>
</feature>
<feature type="disulfide bond" evidence="1">
    <location>
        <begin position="3594"/>
        <end position="3605"/>
    </location>
</feature>
<feature type="disulfide bond" evidence="1">
    <location>
        <begin position="3600"/>
        <end position="3618"/>
    </location>
</feature>
<feature type="disulfide bond" evidence="1">
    <location>
        <begin position="3612"/>
        <end position="3627"/>
    </location>
</feature>
<feature type="disulfide bond" evidence="1">
    <location>
        <begin position="3815"/>
        <end position="3827"/>
    </location>
</feature>
<feature type="disulfide bond" evidence="1">
    <location>
        <begin position="3822"/>
        <end position="3840"/>
    </location>
</feature>
<feature type="disulfide bond" evidence="1">
    <location>
        <begin position="3834"/>
        <end position="3849"/>
    </location>
</feature>
<feature type="disulfide bond" evidence="1">
    <location>
        <begin position="4017"/>
        <end position="4029"/>
    </location>
</feature>
<feature type="disulfide bond" evidence="1">
    <location>
        <begin position="4024"/>
        <end position="4042"/>
    </location>
</feature>
<feature type="disulfide bond" evidence="1">
    <location>
        <begin position="4036"/>
        <end position="4053"/>
    </location>
</feature>
<feature type="disulfide bond" evidence="1">
    <location>
        <begin position="4240"/>
        <end position="4253"/>
    </location>
</feature>
<feature type="disulfide bond" evidence="1">
    <location>
        <begin position="4247"/>
        <end position="4266"/>
    </location>
</feature>
<feature type="disulfide bond" evidence="1">
    <location>
        <begin position="4260"/>
        <end position="4275"/>
    </location>
</feature>
<feature type="disulfide bond" evidence="1">
    <location>
        <begin position="4445"/>
        <end position="4458"/>
    </location>
</feature>
<feature type="disulfide bond" evidence="1">
    <location>
        <begin position="4453"/>
        <end position="4471"/>
    </location>
</feature>
<feature type="disulfide bond" evidence="1">
    <location>
        <begin position="4465"/>
        <end position="4482"/>
    </location>
</feature>
<feature type="disulfide bond" evidence="1">
    <location>
        <begin position="4668"/>
        <end position="4687"/>
    </location>
</feature>
<feature type="disulfide bond" evidence="1">
    <location>
        <begin position="4681"/>
        <end position="4698"/>
    </location>
</feature>
<feature type="disulfide bond" evidence="1">
    <location>
        <begin position="4860"/>
        <end position="4876"/>
    </location>
</feature>
<feature type="disulfide bond" evidence="1">
    <location>
        <begin position="4871"/>
        <end position="4889"/>
    </location>
</feature>
<feature type="disulfide bond" evidence="1">
    <location>
        <begin position="4883"/>
        <end position="4898"/>
    </location>
</feature>
<feature type="disulfide bond" evidence="1">
    <location>
        <begin position="5086"/>
        <end position="5099"/>
    </location>
</feature>
<feature type="disulfide bond" evidence="1">
    <location>
        <begin position="5093"/>
        <end position="5112"/>
    </location>
</feature>
<feature type="disulfide bond" evidence="1">
    <location>
        <begin position="5106"/>
        <end position="5121"/>
    </location>
</feature>
<feature type="disulfide bond" evidence="1">
    <location>
        <begin position="5288"/>
        <end position="5299"/>
    </location>
</feature>
<feature type="disulfide bond" evidence="1">
    <location>
        <begin position="5294"/>
        <end position="5312"/>
    </location>
</feature>
<feature type="disulfide bond" evidence="1">
    <location>
        <begin position="5306"/>
        <end position="5321"/>
    </location>
</feature>
<feature type="disulfide bond" evidence="1">
    <location>
        <begin position="5514"/>
        <end position="5529"/>
    </location>
</feature>
<feature type="disulfide bond" evidence="1">
    <location>
        <begin position="5521"/>
        <end position="5542"/>
    </location>
</feature>
<feature type="disulfide bond" evidence="1">
    <location>
        <begin position="5536"/>
        <end position="5551"/>
    </location>
</feature>
<feature type="disulfide bond" evidence="1">
    <location>
        <begin position="5726"/>
        <end position="5738"/>
    </location>
</feature>
<feature type="disulfide bond" evidence="1">
    <location>
        <begin position="5733"/>
        <end position="5751"/>
    </location>
</feature>
<feature type="disulfide bond" evidence="1">
    <location>
        <begin position="5745"/>
        <end position="5762"/>
    </location>
</feature>
<feature type="disulfide bond" evidence="1">
    <location>
        <begin position="5958"/>
        <end position="5970"/>
    </location>
</feature>
<feature type="disulfide bond" evidence="1">
    <location>
        <begin position="5965"/>
        <end position="5983"/>
    </location>
</feature>
<feature type="disulfide bond" evidence="1">
    <location>
        <begin position="5977"/>
        <end position="5992"/>
    </location>
</feature>
<feature type="disulfide bond" evidence="1">
    <location>
        <begin position="6162"/>
        <end position="6175"/>
    </location>
</feature>
<feature type="disulfide bond" evidence="1">
    <location>
        <begin position="6169"/>
        <end position="6188"/>
    </location>
</feature>
<feature type="disulfide bond" evidence="1">
    <location>
        <begin position="6182"/>
        <end position="6199"/>
    </location>
</feature>
<feature type="disulfide bond" evidence="1">
    <location>
        <begin position="6378"/>
        <end position="6391"/>
    </location>
</feature>
<feature type="disulfide bond" evidence="1">
    <location>
        <begin position="6385"/>
        <end position="6404"/>
    </location>
</feature>
<feature type="disulfide bond" evidence="1">
    <location>
        <begin position="6398"/>
        <end position="6413"/>
    </location>
</feature>
<feature type="non-terminal residue" evidence="8">
    <location>
        <position position="1"/>
    </location>
</feature>
<feature type="non-terminal residue" evidence="8">
    <location>
        <position position="7311"/>
    </location>
</feature>
<keyword id="KW-0903">Direct protein sequencing</keyword>
<keyword id="KW-1015">Disulfide bond</keyword>
<keyword id="KW-0677">Repeat</keyword>
<keyword id="KW-0964">Secreted</keyword>
<reference evidence="8" key="1">
    <citation type="journal article" date="2012" name="Mol. Ecol.">
        <title>Whole transcriptome analysis of the coral Acropora millepora reveals complex responses to CO(2)-driven acidification during the initiation of calcification.</title>
        <authorList>
            <person name="Moya A."/>
            <person name="Huisman L."/>
            <person name="Ball E.E."/>
            <person name="Hayward D.C."/>
            <person name="Grasso L.C."/>
            <person name="Chua C.M."/>
            <person name="Woo H.N."/>
            <person name="Gattuso J.P."/>
            <person name="Foret S."/>
            <person name="Miller D.J."/>
        </authorList>
    </citation>
    <scope>NUCLEOTIDE SEQUENCE [MRNA]</scope>
</reference>
<reference evidence="8" key="2">
    <citation type="journal article" date="2013" name="Mol. Biol. Evol.">
        <title>The skeletal proteome of the coral Acropora millepora: the evolution of calcification by co-option and domain shuffling.</title>
        <authorList>
            <person name="Ramos-Silva P."/>
            <person name="Kaandorp J."/>
            <person name="Huisman L."/>
            <person name="Marie B."/>
            <person name="Zanella-Cleon I."/>
            <person name="Guichard N."/>
            <person name="Miller D.J."/>
            <person name="Marin F."/>
        </authorList>
    </citation>
    <scope>PROTEIN SEQUENCE OF 390-413; 429-444; 495-509; 660-674; 781-804; 1537-1566; 1689-1699; 2070-2080; 2222-2233; 2395-2416; 2698-2709; 2906-2929; 3006-3027; 3185-3193; 3526-3534 AND 3762-3774</scope>
    <scope>TISSUE SPECIFICITY</scope>
    <scope>IDENTIFICATION BY MASS SPECTROMETRY</scope>
</reference>
<dbReference type="EMBL" id="JR994474">
    <property type="status" value="NOT_ANNOTATED_CDS"/>
    <property type="molecule type" value="mRNA"/>
</dbReference>
<dbReference type="SMR" id="B3EWZ6"/>
<dbReference type="OrthoDB" id="412155at2759"/>
<dbReference type="GO" id="GO:0005576">
    <property type="term" value="C:extracellular region"/>
    <property type="evidence" value="ECO:0007669"/>
    <property type="project" value="UniProtKB-SubCell"/>
</dbReference>
<dbReference type="GO" id="GO:0016020">
    <property type="term" value="C:membrane"/>
    <property type="evidence" value="ECO:0007669"/>
    <property type="project" value="InterPro"/>
</dbReference>
<dbReference type="CDD" id="cd00112">
    <property type="entry name" value="LDLa"/>
    <property type="match status" value="15"/>
</dbReference>
<dbReference type="CDD" id="cd06263">
    <property type="entry name" value="MAM"/>
    <property type="match status" value="37"/>
</dbReference>
<dbReference type="CDD" id="cd00111">
    <property type="entry name" value="Trefoil"/>
    <property type="match status" value="2"/>
</dbReference>
<dbReference type="FunFam" id="2.60.120.200:FF:000182">
    <property type="entry name" value="MAM and LDL-receptor class A domain-containing protein 1"/>
    <property type="match status" value="12"/>
</dbReference>
<dbReference type="Gene3D" id="2.60.120.200">
    <property type="match status" value="37"/>
</dbReference>
<dbReference type="Gene3D" id="4.10.400.10">
    <property type="entry name" value="Low-density Lipoprotein Receptor"/>
    <property type="match status" value="15"/>
</dbReference>
<dbReference type="Gene3D" id="4.10.110.10">
    <property type="entry name" value="Spasmolytic Protein, domain 1"/>
    <property type="match status" value="2"/>
</dbReference>
<dbReference type="InterPro" id="IPR013320">
    <property type="entry name" value="ConA-like_dom_sf"/>
</dbReference>
<dbReference type="InterPro" id="IPR036055">
    <property type="entry name" value="LDL_receptor-like_sf"/>
</dbReference>
<dbReference type="InterPro" id="IPR023415">
    <property type="entry name" value="LDLR_class-A_CS"/>
</dbReference>
<dbReference type="InterPro" id="IPR002172">
    <property type="entry name" value="LDrepeatLR_classA_rpt"/>
</dbReference>
<dbReference type="InterPro" id="IPR000998">
    <property type="entry name" value="MAM_dom"/>
</dbReference>
<dbReference type="InterPro" id="IPR051560">
    <property type="entry name" value="MAM_domain-containing"/>
</dbReference>
<dbReference type="InterPro" id="IPR017957">
    <property type="entry name" value="P_trefoil_CS"/>
</dbReference>
<dbReference type="InterPro" id="IPR000519">
    <property type="entry name" value="P_trefoil_dom"/>
</dbReference>
<dbReference type="InterPro" id="IPR044913">
    <property type="entry name" value="P_trefoil_dom_sf"/>
</dbReference>
<dbReference type="PANTHER" id="PTHR23282">
    <property type="entry name" value="APICAL ENDOSOMAL GLYCOPROTEIN PRECURSOR"/>
    <property type="match status" value="1"/>
</dbReference>
<dbReference type="PANTHER" id="PTHR23282:SF101">
    <property type="entry name" value="MAM DOMAIN-CONTAINING PROTEIN"/>
    <property type="match status" value="1"/>
</dbReference>
<dbReference type="Pfam" id="PF00057">
    <property type="entry name" value="Ldl_recept_a"/>
    <property type="match status" value="9"/>
</dbReference>
<dbReference type="Pfam" id="PF00629">
    <property type="entry name" value="MAM"/>
    <property type="match status" value="37"/>
</dbReference>
<dbReference type="Pfam" id="PF00088">
    <property type="entry name" value="Trefoil"/>
    <property type="match status" value="2"/>
</dbReference>
<dbReference type="PRINTS" id="PR00261">
    <property type="entry name" value="LDLRECEPTOR"/>
</dbReference>
<dbReference type="PRINTS" id="PR00020">
    <property type="entry name" value="MAMDOMAIN"/>
</dbReference>
<dbReference type="SMART" id="SM00192">
    <property type="entry name" value="LDLa"/>
    <property type="match status" value="15"/>
</dbReference>
<dbReference type="SMART" id="SM00137">
    <property type="entry name" value="MAM"/>
    <property type="match status" value="37"/>
</dbReference>
<dbReference type="SMART" id="SM00018">
    <property type="entry name" value="PD"/>
    <property type="match status" value="2"/>
</dbReference>
<dbReference type="SUPFAM" id="SSF49899">
    <property type="entry name" value="Concanavalin A-like lectins/glucanases"/>
    <property type="match status" value="37"/>
</dbReference>
<dbReference type="SUPFAM" id="SSF57424">
    <property type="entry name" value="LDL receptor-like module"/>
    <property type="match status" value="14"/>
</dbReference>
<dbReference type="SUPFAM" id="SSF57492">
    <property type="entry name" value="Trefoil"/>
    <property type="match status" value="2"/>
</dbReference>
<dbReference type="PROSITE" id="PS01209">
    <property type="entry name" value="LDLRA_1"/>
    <property type="match status" value="12"/>
</dbReference>
<dbReference type="PROSITE" id="PS50068">
    <property type="entry name" value="LDLRA_2"/>
    <property type="match status" value="14"/>
</dbReference>
<dbReference type="PROSITE" id="PS00740">
    <property type="entry name" value="MAM_1"/>
    <property type="match status" value="1"/>
</dbReference>
<dbReference type="PROSITE" id="PS50060">
    <property type="entry name" value="MAM_2"/>
    <property type="match status" value="37"/>
</dbReference>
<dbReference type="PROSITE" id="PS00025">
    <property type="entry name" value="P_TREFOIL_1"/>
    <property type="match status" value="1"/>
</dbReference>
<dbReference type="PROSITE" id="PS51448">
    <property type="entry name" value="P_TREFOIL_2"/>
    <property type="match status" value="2"/>
</dbReference>
<evidence type="ECO:0000255" key="1"/>
<evidence type="ECO:0000255" key="2">
    <source>
        <dbReference type="PROSITE-ProRule" id="PRU00124"/>
    </source>
</evidence>
<evidence type="ECO:0000255" key="3">
    <source>
        <dbReference type="PROSITE-ProRule" id="PRU00128"/>
    </source>
</evidence>
<evidence type="ECO:0000255" key="4">
    <source>
        <dbReference type="PROSITE-ProRule" id="PRU00779"/>
    </source>
</evidence>
<evidence type="ECO:0000256" key="5">
    <source>
        <dbReference type="SAM" id="MobiDB-lite"/>
    </source>
</evidence>
<evidence type="ECO:0000269" key="6">
    <source>
    </source>
</evidence>
<evidence type="ECO:0000303" key="7">
    <source>
    </source>
</evidence>
<evidence type="ECO:0000305" key="8"/>
<evidence type="ECO:0000305" key="9">
    <source>
    </source>
</evidence>
<organism>
    <name type="scientific">Acropora millepora</name>
    <name type="common">Staghorn coral</name>
    <name type="synonym">Heteropora millepora</name>
    <dbReference type="NCBI Taxonomy" id="45264"/>
    <lineage>
        <taxon>Eukaryota</taxon>
        <taxon>Metazoa</taxon>
        <taxon>Cnidaria</taxon>
        <taxon>Anthozoa</taxon>
        <taxon>Hexacorallia</taxon>
        <taxon>Scleractinia</taxon>
        <taxon>Astrocoeniina</taxon>
        <taxon>Acroporidae</taxon>
        <taxon>Acropora</taxon>
    </lineage>
</organism>
<protein>
    <recommendedName>
        <fullName>MAM and LDL-receptor class A domain-containing protein 2</fullName>
    </recommendedName>
    <alternativeName>
        <fullName evidence="7">Skeletal organic matrix MAM and LDL-receptor 2</fullName>
        <shortName evidence="7">SOM MAM and LDL-receptor 2</shortName>
    </alternativeName>
</protein>
<accession>B3EWZ6</accession>
<sequence>NQPAYCDFEKDNWCTWTNSDKEDDFDWLLGSGSTPSVYTGPSNDHTTGLGIGKYMFIETSSPRKSGDKARFYSERLSPTSLRGRCVKFWYHMYGSSIGTLKVFVKTGAGNRSESLVWSLSGNQRNRWNFGQVTIASYRSAYQIVFEGIRGNSYRGDIAIDDITYTVGSCVTLPRGAVPTTPPTTVRPTTSPTVPPKGALDCDFERGFCSWVQDSSDKFNWTRQSRGTASSNTGPSADHTLKNATGYYAYIEASFPRRANDTARLISPLIPANSRPGMCISFWYHMYGPHIDTLNVYTKVGSSLGSAIWKKTGNQGNKWRYGQVFVRMVLNFQIVFEGVRGRSYQGDIAIDDVTVRNGFCSPLKQCTFEDAGMCGWRNEKSAGVDDFDWTRQSGATSSSGTGPTFDHTLGTARGFYMYIETSFPRKQGDKAQLLSPSYPSTSGKCLRFWYHMYGNHIGTLNIRIKQMVLGRPTYFLQWSRSGDHGNNWRVAQVTIRSGSQFQVVFEGIRGSGYQGDIAIDDVELKDNVCPPPGDCNFETGTCNWVNVQNTDNFDWLRGRGSTPSSFTGPSVDHTTNSSSGYYMFIETSSPRRIGDKARFESEEFQPTGSSGRCLKFWYHMYGSSVRGLNVWMSSNGSTGQIWTLSGNQRQDKWFYAQAPVRSANVYQVIFEGVRGLSYAGDIAIDDVQFIVGNCPVLPSKAKPLNPWTPRPVPTVAPTNSTTPAPSIYDCTFEQSMCTWTQALDDSFNWTRTKGRTPSRFTGPVSDHTTGGSAGYYVYIETSSPRKANETARIESVTIPATQQKCLQFWYHMYGPHVDTLNVYTKINNQLGVPVWTLNGTQGNKWRHAVVSLTVSSKFKVVFEGRRGVSWAGDIALDDISFQDGQCPVQMQCSFENPNLCGWSNVQGDNFDWTRSNGYTSSSGTGPSVDHTSGTSNGYYMYIETSSPRSRGHKAWFVSSPFKATNGRCLQFWYHMYGATIGALNVLLLQNRTRSAPIWNLSGNQGNLWRMAQVTLKSPTDFKVIFEGVTGTSYTGDIAIDDVEIMDGACPLPGDCTFEKGTCTWVNSLNVVDDEFDWTRGSGGTPSSFTGPSTDHTTGTKNGNYMFIETSFPRKRGDRARLESEVFPPTTSTGRCMSFWYHMMGGHIGTLNVYMKIYGQSETKLWSMTLDQGNNWNSARVPIVSGNRYYQIILEGVRGSSYQGDIAIDDISFVATARRCRLSPSNAVPFDCNFELGTCSWTQSFRDQFHWTRHQGSTGSFLTGPSIDHTTATNKGWYIYIETSGPRRPNDTARIVSPTIAGNGTVKVIRCVSFWYHMYGPHVDELRLYKKEGFSLGKPQWVRQGDQGNKWIKGEYTVEHTNGIQIVFEGVRGVSYRGDIALDDISLKDGSCPSSGMCSFEAPDICGYTQDHDTDQFDWSRSNGPTASFSTGPAADHTYGTLFGHFMYTEVSPSSITQGSKARLLSPRYPATRGSCLQFWYHMYGQTIGTLNVYTRRSSWSLNKVWSKTGNDTNIWNVAQVTIRSPFAYQIVFEGVKGRSYTGDIAIDDVKIMSGSCPAPGDCSFEKGFCTWANTRQVDTFDWIIGGGTTSSFGTGPSGDHTTGSGQYVFIETSAPRQHGDNAYLLSQPFDPAPSGRCLKFWHHMRGASIGTLNVYLHTGNFSAMQLLWQRNGNKGSTWMIGQTPITSSVKYQVVFEGIRGNSFTGDIALDDISFTVGAANCIQRPYDSLPPGVTTSAPTLSTSSSVAPTTIGNIGNDCNFDVGICKWTFASYGQFNWTRHQGSTASSGTGPKYDHTRGNSGQGYYMYIETSVPRRPNDTAGLVSPKVQKVGSFACVIFWYHMFGPHINQLNVYFKDGSKAKTLMWQKIGSQADEWRQGLLQLSPSQGSYQVIFEGVRGTSYQGDISLDDISFQNNKCPSSTDCTFEYFLGSISNTCGWTQDGSDDFDWTRTSGGTPSHATGPSADHTYGTSQGYYMHIETSYPRRRGDKARLISPVYRPVRGGQCFQFWYHMYGSDIDRLNVYIKTGSNISIPVWSRSGNRGDLWKISQVPVTTTVNFNIVIEGIAGRSFRGDIAIDDLKLIKSPCPLPGDCDFESGMCTYDNTQAEDQFDWLRNAGATPSWRTGPSVDHTLGTGFGHYMYIETSSPRRQGDKARLMSEDFNPTTSSGRCVRFWYHLYGNAIGTLRVLVKTGPGNQSETAIWELSGNFGNQWYSAQAPVSSAKVYQVVFEGVRGRGVSGDIAIDDITFATTRCSVVPSLAVPPTPPPTTPPPVINNCTFEGGFCSWKNLRGDNFDWTRSRGATSSWRTGPTTDHTLGTRAGYYVYIETSFPRRSKDKAWLQSGLIQPTTVTNGRCLKFWYHMWGTHVDTLNVYRKVGSSPNVRIWFRRGTQGNKWRFAQVNLLSNQPFYVIFEGVRGLSYQGDIALDDLDIADGPCPPLTVCDFETDMCKWTNIAIGDQFDWKRDSGGTPSAGTGPSRDHTTGTRNGMYMYIETSLPRRQGDKAYFISPRYDAAPNGKCFKFWYHMYGRHIGKLNIYVKAGPALGAMVWNETGNQGNFWLHGKAPVKISTQFQIVIEGIRGASYAGDIALDDFSLDDSPCPPEGSCDFEEKSFCSWLNVPNGNKSLGLDDFDWTLGSGSTPSWQTGPSTDHTTGSSLGTYAFIETSNPRRAGHIARIRSKTFSATNGKCMSWWFHMYGRSVGSLNVYIKKGGSPESLLWNTKGNQGNVWKKTEVTITSKSDFQIIFEGVSGAGFQGDIAIDDIDFADKYCVGLCSSVNPQQRVDCSGGLGISKTTCVNLRRCCWDDSVPNVPVCFYHPSACASVIPANRRTCGFSGISSSQCRTRGCCWDNSLSNVPWCFHGPARPTDFPTQPPPPTTLPPSKWDCTFESGFCNWNNSQEDDFNWSRQSGGSPSIGTGPTSDHTTGSLRGYYVYIETSYGSANDTAVLESAMVPATIRKPSGMICLQFWYHMRGQHVDTLNVFVKPGNQLPSSPTWTKSGTQGTQWRLGQVAVSSRAPFQFVFQGIRGKGYQGDIALDDIRVLDGTCPPSRECDFESPNLCNFTQDTGDIFDWSRGSGNTISVGTGPSYDHTYKTASGYYMYIETSAPRRTGDYARIESISYDQTVGNGRCLVFWHHMYGGGIGRLNVYIKRGNSLGTPVWRKNGNHGNKWWRGMVTVRSPNQKWKVVFEGIRGRGGRGDIAIDDIIVKDQPCPPPGSCDFESGWCAYQNDLTGDDFDWERNTGHTSSIGTGPSVDHTTGSPQGHYVYIESSYPRTKGDVARLTSDLFEVSKGYAWCLSFWYHMYGNSVGSLSVKITIYPFRKDKPYTRLLWTQQLNHGDVWLTDTVQINSPDDFEIVFEAVVGSSYDADIAIDDIVVTAGFCPSPKPTVAPNPCAVRCKSNNKCVSSTQLCDFVNDCGRGDNSDEKNCGACTFEQDLCGWNDTSKGAFKWNKDRGGTPSSNTGPTIDHTLGTALGYYMYVEASQGRIRDMAQLESPWLKQSASTCVVSFWYHMYGRGIGRLYGYIKVGLTYTRLFQQSGNKGNNWLQGKLYVGRRFAPFKIIFEAERSYNVFGDVAVDDVSFVNCTLPPIVSSCGQQHRCIRGSCIDRGRVCDYTDDCGDNSDEQNCYNFKYRCSFEKSLCQWTQLKDEEFDWTRNQGVTASYNTGPMFDHTLGTAAGYYLYAEASYPRKKGDKARLASGFITTPGDDSCKLRLYFHMFGSGIGSLNVYTRPCNGCAETLVYTRSGNLGNFWERAEVALMSRVPFQVIIESVRGVSYLGDIAIDDLSMTSSCQSYRGPLPTAPPPTTAIPTPPPCPRFQFKCSNGLCIDTWNVCNYRDDCGDGSDEVNCGSCSFEPGLCGYQDVSLTLYQWSRNRGTTVVPRTGPSVDHTCGNASCFYAYVHSGAGSFFDDAILQSRNMTKTGPGCVVSFYYHMYSRLSAGFTGTLYLRLKYKGTTSNLFEVYGNNGDKWKRAEVGLGSLDAGFSIQFVASKFVTAADIAVDDVTFQGCALPPIRSCISGEYRCTRGSCVLPSQLCDFSDDCGDMSDENPSTCASYKERCNFEQDLCSWTQDTDDDFDWTKDSGGTPSSWTGPGRDHTKGSSKGFYMYIETSSPRKSNESARMSSMTFRPSSRNDSCYMRFWYHMFGKDVDTLSIKLRISMIGPLIPLWNRTGEQGDMWRRAEIHLASNVNFQVVIEGLSGPGFQGDIAIDDVSFTPNCRPDSTASISTTIPTGPPIPGCQPGKFKCANGGNCISVSKVCNFYSDCSGGSDEMNCPATCNFQNSFCKWQNAKSVDHYDWVRNKGQTPSRFTGPSVDHTTNSSAGYYIYTEVSNRTGFFADAHLVSPLFRQAGKNCQFKFWYHMFGPNIGFLQVFYRRNSRDQQLFSVFGNKGNKWNQGTVDIPKCANDFRIVIMAKHYSGGALGDIAVDDVSFEHCAESPPSQTCSGLSVFRCQSGHCIAMSGKCDFEPDCCDGSEETNIVCAKYNRCNFEAGLCDWTQLANDTFNWRMQSGRTGSHRTGPSLDHTTRSRNGRYMYIEASSPRKPGDSAILGSAVFKPTGSCKLRFFYHMYGSHIGHLNVSIRTSTNGPSTVLWTKSGDQGDKWTRATVSISVSKNFQVLIEGVVGSSYRGDIAIDDISFTPDCVVGGTIPGLPPPPPTPTQPSCFNCRDGSACVNISKTCDFHNDCTDKSDEDADLCGWPCDFQRGTCSWTNSNRDNFDWTRHKGCTASVSTGPCVDADNRTSGYYMYIETSTGLIGNKAVLVSPRYQQAYSTAQLSFWYHMYGRTIGRLSVYLNDGINRTRMWTLYGNQGDQWYQTFISLGRRRTPFTIEFEALRGSSWSGDIAIDSISMNNYTLTYCSGQLPPTKWRCRNGACVDANALCDFSDDCGDNSDEQSCSNYFSRCTFENGLCDWFQGSGDEIDWIRNKGPTPSFSTGPSRDHTLGTVEGYYLYMEATGQKFGDRARLASNNLMGKCNLRMFYHMHGIHVNSLAVYMRTKLNGPLRVVANMSGSVGDNWIRSEVNVTNGDQPFQIVIEGVRGRGYRGDIAIDDLSIAMKPSCQQFFGSLPWLGSTVKPITTVAPNNCVLPQVPCVSDGKCVSPSQVCDFNLDCADASDERSCPHMCTFESDQCGWVNTVKDNFDWSRKRGRTPSFGTGPSVDHTTGTNQGYYMYIETSYGRIGDRARLISPQFKKSHSNCKMVFWYHMYGSSIGSLSVYLNVSSNTKLWWRKYGYQGNQWYRGVVGIGKRSNAFQIIFLGIRGRSYSGDIAIDDIKFVDCALPPVARSCPSQFTCARNSCVSNDYVCDFNDDCGDGSDETLCGAYTTRCDFSRGSCDWTQSNEDDFNWLRRKGATSSFNTGPPSDHTSQTGYYMYIETSWPRRYGDKAWLVSRNFQEMTPGSESCKLRFFYHMFGDSAESLNVYIRTYRNGSALQRVWGVKGSRGAIWNRAVITLSSRKNFQVLIEGIRGDSYTGDIGIDDVSFTTGCKQFSGNLPVAPPISPTSNPATTKPHQCTTAEFNCFNQGSGACIPSTQVCNFQPNCNDGVDEQNCAKTKCSFDGGDFCNWYVNNPSRTRRALAYTWLAQQGATGSSGTGPTKDHTTGTLSGWYIYAESSGGSNDDRAPLTTPLIGQTGPECTLLFWYHMFGVSVGTLSVKLSFLDGTQSVMWSKSGSQGNRWRQSKLMIGSRQLFKVTFEARRSYGYKGDIALDDIEFLNCVPLDLTKKCTADEFQCARGGCIPKTSVCDFKADCMVGDVSDESSCSAYRSGQCDFEHGLCLYSQSSDDKFDWTVKTGGTFSYNTGPTIDHTTKSKKGHYMYIETSWPRRNGDNARLNSPILKSTSSNCYLRFFYHMKGNHIGNLSVFSRTGYSVGDLSGPLLNITGAQGDFWNRSMVKAPVSSNDFQFVIEGVRGNGYQGDIAIDDVSLTPGCQICTDCTLPGQPTSTPFGFHTRPTGTPCSLQQYVCKNLRCVDKAQICNFKDDCGDNSDELPCGSNCTFEGDCYRGWRQSTGSSNFHWRRRNGKTPSVGTGPTNDHTFGNQNGYYMYIETSNGSPGDKAELASYRYFASSPNCRMSLWYHMFGTGVGSLEVKLKKSDGTYEILGNALTGSQGNAWKKYTLNIGANKNFEILIVAARGINWQGDIAIDDISFTDNCFVDLNRTCTPNEVKCRTSGHCVAEQRVCDHVKDCNDGTDEDALICSNRTASCDFDVNWCQWDNYWVDDFNWLRASAIGTPNTGPRADHTTGKGYFLYIDSSKPRQLFDKARLVHPNVFPSGRGVCTLRFYYNMYGSQNMGYLNVYLVYSGYSQWTQVWRTRGDPANRLWVRAEIQLNSQSSFRVGFEGIVGGGDKTDIALDDISFSAGCYKGGSPPLPTGSARCSKVQFYCKADDLCINIHWKCDGEKDCTDGADEMLCPSPTKQPTPPPGLTHPANCNFESGFCLWRSAFFADMNWLRNRGQTPSRQTGPDGDHTTGTGYYVYAEATGHYMNQFGELLGPNMMPSSTCKVYFCYLMHGKDMGTLNVYQRFPSDKKPDQTQKRKWSQSLDFGKKWRCVYVPLPSTRQFSVVFEAIRGKGYRSDIALDDIKFVNCAKLGPTQKPTPAPRGTILDEDFEDCISCWMNEKNGHDQMDWVIGRGETSSLNTGPSYDHTRKTIYGRYLYIDVYSASHIQGWVHADLESRLMVVQRRCYMTFWYHMYGAGMGSLWIVAYVYDDPKNLNDWREVSLWYSYGNQGNKWTSGKVNLFNHLTASKTSRVVISGIRGSDYTGDIAIDDIKFHNCDFKDDKTPCGEVFDRCNDRPIPKPTLGPASGDCTFESGLCHWNNTIVNDMPWFLRKGKTGSQYTGPAVDHTLGTPDGYYVHIEASWYTRGSVAILEGPYTLPTQNCEMKFYYHMFGGDCGSLLVYINSGDSVKLVFNKTGEQGKDWLGASVQLKSDYAFRIHITATRGSSYKGDIAIDDISFKGQCQFTSNAALRYGDKLLTTGCADGGREGFFSHPSVAGCKGRWSRPESLRAKPTSGAKCGDDIGLWGRSCSQPAELCATGWHICGSYGVREIVNRTNGIDCQEAGYGKFSAGINHCMQNNAGGDGCKRVVTDIDYGCGKYYDSCSEPLCCGSNCQGPDICDSGVFRAATRYSASSEHLEGCSFISSDNAGGIMCCKDDATTPTPAPTMPPVPGSCNFETGLCGWIVDSSTALSFGLGQGETVTRNTGPRYDNTKKDMTGTYLSMPAVNGKPNDIARVSHHFSNVTQSYCQINFFYHMYGAGMGSLRVFVELDGGGKKKVWEKTGNQGDGWLRGAQNFSGADQEDDCIYNNL</sequence>
<comment type="subcellular location">
    <subcellularLocation>
        <location evidence="9">Secreted</location>
    </subcellularLocation>
</comment>
<comment type="tissue specificity">
    <text evidence="6">Component of the acid-insoluble and acid-soluble organic matrix of the aragonitic skeleton (at protein level).</text>
</comment>
<proteinExistence type="evidence at protein level"/>